<name>SYGA_SALDC</name>
<proteinExistence type="inferred from homology"/>
<sequence>MQKFDTRTFQGLILTLQDYWARQGCTIVQPLDMEVGAGTSHPMTCLRALGPEPMATAYVQPSRRPTDGRYGENPNRLQHYYQFQVVIKPSPDNIQELYLGSLKELGMDPTIHDIRFVEDNWENPTLGAWGLGWEVWLNGMEVTQFTYFQQVGGLECKPVTGEITYGLERLAMYIQGVDSVYDLVWSDGPLGKTTYGDVFHQNEVEQSTYNFEYADVDFLFTCFEQYEKEAQQLLALENPLPLPAYERILKAAHSFNLLDARKAISVTERQRYILRIRTLTKAVAEAYYASREALGFPMCNKDK</sequence>
<dbReference type="EC" id="6.1.1.14" evidence="1"/>
<dbReference type="EMBL" id="CP001144">
    <property type="protein sequence ID" value="ACH76273.1"/>
    <property type="molecule type" value="Genomic_DNA"/>
</dbReference>
<dbReference type="RefSeq" id="WP_001168551.1">
    <property type="nucleotide sequence ID" value="NC_011205.1"/>
</dbReference>
<dbReference type="SMR" id="B5FLD0"/>
<dbReference type="GeneID" id="89546728"/>
<dbReference type="KEGG" id="sed:SeD_A4038"/>
<dbReference type="HOGENOM" id="CLU_057066_1_0_6"/>
<dbReference type="Proteomes" id="UP000008322">
    <property type="component" value="Chromosome"/>
</dbReference>
<dbReference type="GO" id="GO:0005829">
    <property type="term" value="C:cytosol"/>
    <property type="evidence" value="ECO:0007669"/>
    <property type="project" value="TreeGrafter"/>
</dbReference>
<dbReference type="GO" id="GO:0005524">
    <property type="term" value="F:ATP binding"/>
    <property type="evidence" value="ECO:0007669"/>
    <property type="project" value="UniProtKB-UniRule"/>
</dbReference>
<dbReference type="GO" id="GO:0004820">
    <property type="term" value="F:glycine-tRNA ligase activity"/>
    <property type="evidence" value="ECO:0007669"/>
    <property type="project" value="UniProtKB-UniRule"/>
</dbReference>
<dbReference type="GO" id="GO:0006426">
    <property type="term" value="P:glycyl-tRNA aminoacylation"/>
    <property type="evidence" value="ECO:0007669"/>
    <property type="project" value="UniProtKB-UniRule"/>
</dbReference>
<dbReference type="CDD" id="cd00733">
    <property type="entry name" value="GlyRS_alpha_core"/>
    <property type="match status" value="1"/>
</dbReference>
<dbReference type="FunFam" id="1.20.58.180:FF:000001">
    <property type="entry name" value="Glycine--tRNA ligase alpha subunit"/>
    <property type="match status" value="1"/>
</dbReference>
<dbReference type="FunFam" id="3.30.930.10:FF:000006">
    <property type="entry name" value="Glycine--tRNA ligase alpha subunit"/>
    <property type="match status" value="1"/>
</dbReference>
<dbReference type="Gene3D" id="3.30.930.10">
    <property type="entry name" value="Bira Bifunctional Protein, Domain 2"/>
    <property type="match status" value="1"/>
</dbReference>
<dbReference type="Gene3D" id="1.20.58.180">
    <property type="entry name" value="Class II aaRS and biotin synthetases, domain 2"/>
    <property type="match status" value="1"/>
</dbReference>
<dbReference type="HAMAP" id="MF_00254">
    <property type="entry name" value="Gly_tRNA_synth_alpha"/>
    <property type="match status" value="1"/>
</dbReference>
<dbReference type="InterPro" id="IPR045864">
    <property type="entry name" value="aa-tRNA-synth_II/BPL/LPL"/>
</dbReference>
<dbReference type="InterPro" id="IPR006194">
    <property type="entry name" value="Gly-tRNA-synth_heterodimer"/>
</dbReference>
<dbReference type="InterPro" id="IPR002310">
    <property type="entry name" value="Gly-tRNA_ligase_asu"/>
</dbReference>
<dbReference type="NCBIfam" id="TIGR00388">
    <property type="entry name" value="glyQ"/>
    <property type="match status" value="1"/>
</dbReference>
<dbReference type="NCBIfam" id="NF006827">
    <property type="entry name" value="PRK09348.1"/>
    <property type="match status" value="1"/>
</dbReference>
<dbReference type="PANTHER" id="PTHR30075:SF2">
    <property type="entry name" value="GLYCINE--TRNA LIGASE, CHLOROPLASTIC_MITOCHONDRIAL 2"/>
    <property type="match status" value="1"/>
</dbReference>
<dbReference type="PANTHER" id="PTHR30075">
    <property type="entry name" value="GLYCYL-TRNA SYNTHETASE"/>
    <property type="match status" value="1"/>
</dbReference>
<dbReference type="Pfam" id="PF02091">
    <property type="entry name" value="tRNA-synt_2e"/>
    <property type="match status" value="1"/>
</dbReference>
<dbReference type="PRINTS" id="PR01044">
    <property type="entry name" value="TRNASYNTHGA"/>
</dbReference>
<dbReference type="SUPFAM" id="SSF55681">
    <property type="entry name" value="Class II aaRS and biotin synthetases"/>
    <property type="match status" value="1"/>
</dbReference>
<dbReference type="PROSITE" id="PS50861">
    <property type="entry name" value="AA_TRNA_LIGASE_II_GLYAB"/>
    <property type="match status" value="1"/>
</dbReference>
<organism>
    <name type="scientific">Salmonella dublin (strain CT_02021853)</name>
    <dbReference type="NCBI Taxonomy" id="439851"/>
    <lineage>
        <taxon>Bacteria</taxon>
        <taxon>Pseudomonadati</taxon>
        <taxon>Pseudomonadota</taxon>
        <taxon>Gammaproteobacteria</taxon>
        <taxon>Enterobacterales</taxon>
        <taxon>Enterobacteriaceae</taxon>
        <taxon>Salmonella</taxon>
    </lineage>
</organism>
<gene>
    <name evidence="1" type="primary">glyQ</name>
    <name type="ordered locus">SeD_A4038</name>
</gene>
<accession>B5FLD0</accession>
<keyword id="KW-0030">Aminoacyl-tRNA synthetase</keyword>
<keyword id="KW-0067">ATP-binding</keyword>
<keyword id="KW-0963">Cytoplasm</keyword>
<keyword id="KW-0436">Ligase</keyword>
<keyword id="KW-0547">Nucleotide-binding</keyword>
<keyword id="KW-0648">Protein biosynthesis</keyword>
<comment type="catalytic activity">
    <reaction evidence="1">
        <text>tRNA(Gly) + glycine + ATP = glycyl-tRNA(Gly) + AMP + diphosphate</text>
        <dbReference type="Rhea" id="RHEA:16013"/>
        <dbReference type="Rhea" id="RHEA-COMP:9664"/>
        <dbReference type="Rhea" id="RHEA-COMP:9683"/>
        <dbReference type="ChEBI" id="CHEBI:30616"/>
        <dbReference type="ChEBI" id="CHEBI:33019"/>
        <dbReference type="ChEBI" id="CHEBI:57305"/>
        <dbReference type="ChEBI" id="CHEBI:78442"/>
        <dbReference type="ChEBI" id="CHEBI:78522"/>
        <dbReference type="ChEBI" id="CHEBI:456215"/>
        <dbReference type="EC" id="6.1.1.14"/>
    </reaction>
</comment>
<comment type="subunit">
    <text evidence="1">Tetramer of two alpha and two beta subunits.</text>
</comment>
<comment type="subcellular location">
    <subcellularLocation>
        <location evidence="1">Cytoplasm</location>
    </subcellularLocation>
</comment>
<comment type="similarity">
    <text evidence="1">Belongs to the class-II aminoacyl-tRNA synthetase family.</text>
</comment>
<evidence type="ECO:0000255" key="1">
    <source>
        <dbReference type="HAMAP-Rule" id="MF_00254"/>
    </source>
</evidence>
<feature type="chain" id="PRO_1000101224" description="Glycine--tRNA ligase alpha subunit">
    <location>
        <begin position="1"/>
        <end position="303"/>
    </location>
</feature>
<protein>
    <recommendedName>
        <fullName evidence="1">Glycine--tRNA ligase alpha subunit</fullName>
        <ecNumber evidence="1">6.1.1.14</ecNumber>
    </recommendedName>
    <alternativeName>
        <fullName evidence="1">Glycyl-tRNA synthetase alpha subunit</fullName>
        <shortName evidence="1">GlyRS</shortName>
    </alternativeName>
</protein>
<reference key="1">
    <citation type="journal article" date="2011" name="J. Bacteriol.">
        <title>Comparative genomics of 28 Salmonella enterica isolates: evidence for CRISPR-mediated adaptive sublineage evolution.</title>
        <authorList>
            <person name="Fricke W.F."/>
            <person name="Mammel M.K."/>
            <person name="McDermott P.F."/>
            <person name="Tartera C."/>
            <person name="White D.G."/>
            <person name="Leclerc J.E."/>
            <person name="Ravel J."/>
            <person name="Cebula T.A."/>
        </authorList>
    </citation>
    <scope>NUCLEOTIDE SEQUENCE [LARGE SCALE GENOMIC DNA]</scope>
    <source>
        <strain>CT_02021853</strain>
    </source>
</reference>